<gene>
    <name type="primary">plc</name>
</gene>
<keyword id="KW-0106">Calcium</keyword>
<keyword id="KW-0204">Cytolysis</keyword>
<keyword id="KW-0354">Hemolysis</keyword>
<keyword id="KW-0378">Hydrolase</keyword>
<keyword id="KW-0479">Metal-binding</keyword>
<keyword id="KW-0964">Secreted</keyword>
<keyword id="KW-0732">Signal</keyword>
<keyword id="KW-0800">Toxin</keyword>
<keyword id="KW-0843">Virulence</keyword>
<keyword id="KW-0862">Zinc</keyword>
<dbReference type="EC" id="3.1.4.3"/>
<dbReference type="EMBL" id="AF525415">
    <property type="protein sequence ID" value="AAM88377.1"/>
    <property type="molecule type" value="Genomic_DNA"/>
</dbReference>
<dbReference type="SMR" id="P59026"/>
<dbReference type="GO" id="GO:0005576">
    <property type="term" value="C:extracellular region"/>
    <property type="evidence" value="ECO:0007669"/>
    <property type="project" value="UniProtKB-SubCell"/>
</dbReference>
<dbReference type="GO" id="GO:0034480">
    <property type="term" value="F:phosphatidylcholine phospholipase C activity"/>
    <property type="evidence" value="ECO:0007669"/>
    <property type="project" value="UniProtKB-EC"/>
</dbReference>
<dbReference type="GO" id="GO:0090729">
    <property type="term" value="F:toxin activity"/>
    <property type="evidence" value="ECO:0007669"/>
    <property type="project" value="UniProtKB-KW"/>
</dbReference>
<dbReference type="GO" id="GO:0008270">
    <property type="term" value="F:zinc ion binding"/>
    <property type="evidence" value="ECO:0007669"/>
    <property type="project" value="InterPro"/>
</dbReference>
<dbReference type="GO" id="GO:0031640">
    <property type="term" value="P:killing of cells of another organism"/>
    <property type="evidence" value="ECO:0007669"/>
    <property type="project" value="UniProtKB-KW"/>
</dbReference>
<dbReference type="CDD" id="cd11009">
    <property type="entry name" value="Zn_dep_PLPC"/>
    <property type="match status" value="1"/>
</dbReference>
<dbReference type="Gene3D" id="1.10.575.10">
    <property type="entry name" value="P1 Nuclease"/>
    <property type="match status" value="1"/>
</dbReference>
<dbReference type="Gene3D" id="2.60.60.20">
    <property type="entry name" value="PLAT/LH2 domain"/>
    <property type="match status" value="1"/>
</dbReference>
<dbReference type="InterPro" id="IPR001024">
    <property type="entry name" value="PLAT/LH2_dom"/>
</dbReference>
<dbReference type="InterPro" id="IPR036392">
    <property type="entry name" value="PLAT/LH2_dom_sf"/>
</dbReference>
<dbReference type="InterPro" id="IPR008947">
    <property type="entry name" value="PLipase_C/P1_nuclease_dom_sf"/>
</dbReference>
<dbReference type="InterPro" id="IPR029002">
    <property type="entry name" value="PLPC/GPLD1"/>
</dbReference>
<dbReference type="InterPro" id="IPR001531">
    <property type="entry name" value="Zn_PLipaseC"/>
</dbReference>
<dbReference type="Pfam" id="PF01477">
    <property type="entry name" value="PLAT"/>
    <property type="match status" value="1"/>
</dbReference>
<dbReference type="Pfam" id="PF00882">
    <property type="entry name" value="Zn_dep_PLPC"/>
    <property type="match status" value="1"/>
</dbReference>
<dbReference type="PRINTS" id="PR00479">
    <property type="entry name" value="PRPHPHLPASEC"/>
</dbReference>
<dbReference type="SMART" id="SM00770">
    <property type="entry name" value="Zn_dep_PLPC"/>
    <property type="match status" value="1"/>
</dbReference>
<dbReference type="SUPFAM" id="SSF49723">
    <property type="entry name" value="Lipase/lipooxygenase domain (PLAT/LH2 domain)"/>
    <property type="match status" value="1"/>
</dbReference>
<dbReference type="SUPFAM" id="SSF48537">
    <property type="entry name" value="Phospholipase C/P1 nuclease"/>
    <property type="match status" value="1"/>
</dbReference>
<dbReference type="PROSITE" id="PS50095">
    <property type="entry name" value="PLAT"/>
    <property type="match status" value="1"/>
</dbReference>
<dbReference type="PROSITE" id="PS00384">
    <property type="entry name" value="PROKAR_ZN_DEPEND_PLPC_1"/>
    <property type="match status" value="1"/>
</dbReference>
<dbReference type="PROSITE" id="PS51346">
    <property type="entry name" value="PROKAR_ZN_DEPEND_PLPC_2"/>
    <property type="match status" value="1"/>
</dbReference>
<accession>P59026</accession>
<organism>
    <name type="scientific">Clostridium haemolyticum</name>
    <dbReference type="NCBI Taxonomy" id="84025"/>
    <lineage>
        <taxon>Bacteria</taxon>
        <taxon>Bacillati</taxon>
        <taxon>Bacillota</taxon>
        <taxon>Clostridia</taxon>
        <taxon>Eubacteriales</taxon>
        <taxon>Clostridiaceae</taxon>
        <taxon>Clostridium</taxon>
    </lineage>
</organism>
<comment type="function">
    <text evidence="1">Bacterial hemolysins are exotoxins that attack blood cell membranes and cause cell rupture. Binds to eukaryotic membranes where it hydrolyzes phosphatidylcholine, sphingomyelin and phosphatidylethanolamine. The diacylglycerol produced can activate both the arachidonic acid pathway, leading to modulation of the inflammatory response cascade and thrombosis, and protein kinase C, leading to activation of eukaryotic phospholipases and further membrane damage (By similarity).</text>
</comment>
<comment type="catalytic activity">
    <reaction>
        <text>a 1,2-diacyl-sn-glycero-3-phosphocholine + H2O = phosphocholine + a 1,2-diacyl-sn-glycerol + H(+)</text>
        <dbReference type="Rhea" id="RHEA:10604"/>
        <dbReference type="ChEBI" id="CHEBI:15377"/>
        <dbReference type="ChEBI" id="CHEBI:15378"/>
        <dbReference type="ChEBI" id="CHEBI:17815"/>
        <dbReference type="ChEBI" id="CHEBI:57643"/>
        <dbReference type="ChEBI" id="CHEBI:295975"/>
        <dbReference type="EC" id="3.1.4.3"/>
    </reaction>
</comment>
<comment type="cofactor">
    <cofactor evidence="1">
        <name>Ca(2+)</name>
        <dbReference type="ChEBI" id="CHEBI:29108"/>
    </cofactor>
    <text evidence="1">Binds 3 Ca(2+) ions.</text>
</comment>
<comment type="cofactor">
    <cofactor evidence="1">
        <name>Zn(2+)</name>
        <dbReference type="ChEBI" id="CHEBI:29105"/>
    </cofactor>
    <text evidence="1">Binds 3 Zn(2+) ions.</text>
</comment>
<comment type="subcellular location">
    <subcellularLocation>
        <location evidence="3">Secreted</location>
    </subcellularLocation>
</comment>
<comment type="domain">
    <text evidence="1">The protein is composed of 2 domains; the N-terminal domain contains the phospholipase C active site (PLC), in a cleft which is also occupied by the 3 zinc ions. The C-terminal domain is a putative phospholipid-recognition domain, which shows structural homology with phospholipid-binding C2-like domains from a range of eukaryotic proteins. The ability to bind membrane phospholipids in a Ca(2+) dependent manner and toxicity is conferred by this C-terminal domain, which also contributes to the sphingomyelinase activity (By similarity).</text>
</comment>
<comment type="similarity">
    <text evidence="3">Belongs to the bacterial zinc-metallophospholipase C family.</text>
</comment>
<name>PHLC_CLOHA</name>
<evidence type="ECO:0000250" key="1"/>
<evidence type="ECO:0000255" key="2">
    <source>
        <dbReference type="PROSITE-ProRule" id="PRU00152"/>
    </source>
</evidence>
<evidence type="ECO:0000255" key="3">
    <source>
        <dbReference type="PROSITE-ProRule" id="PRU00678"/>
    </source>
</evidence>
<reference key="1">
    <citation type="journal article" date="2004" name="Anaerobe">
        <title>Cloning and molecular characterization of the beta toxin (phospholipase C) gene of Clostridium haemolyticum.</title>
        <authorList>
            <person name="Hauer P.J."/>
            <person name="Yeary T.J."/>
            <person name="Rosenbusch R.F."/>
        </authorList>
    </citation>
    <scope>NUCLEOTIDE SEQUENCE [GENOMIC DNA]</scope>
    <source>
        <strain>7170</strain>
    </source>
</reference>
<reference key="2">
    <citation type="journal article" date="2000" name="Microbes Infect.">
        <title>Structure and function of clostridial phospholipases C.</title>
        <authorList>
            <person name="Jepson M."/>
            <person name="Titball R.W."/>
        </authorList>
    </citation>
    <scope>REVIEW</scope>
</reference>
<sequence>MNKKKILKFICSAVLSFTLFSGYKSYAWDGKVDGTGTHALIVTQAVEILKNDVISTSPLSVKENFKILESNLKKLQRGSTYPDYDPKAYALYQDHFWDPDTDNNFTKDSKWYLAYGINETGESQLRKLFALAKDEWKKGNYEQATWLLGQGLHYFGDFHTPYHPSNVTAVDSAGHTKFETYVEGKKDSYKLHTAGANSVKEFYPTTLQNTNLDNWITEYSRGWAKKAKNMYYAHATMSHSWKDWEIAATETMHNVQIGSAGIIYRFLNEVSGTINTTENSKINEIMVVIKTANEDKAGTDHYIHFGIEAKDGKKYEWTLDNPGNDFEKNQEDSYRINLKDNKLTLQDIAKTWIRKERGAGVRDDWKPEYVKVIINSDVKYQANINEWFGDNKTFYINNK</sequence>
<protein>
    <recommendedName>
        <fullName>Phospholipase C</fullName>
        <shortName>PLC</shortName>
        <ecNumber>3.1.4.3</ecNumber>
    </recommendedName>
    <alternativeName>
        <fullName>Beta toxin</fullName>
    </alternativeName>
    <alternativeName>
        <fullName>Phosphatidylcholine cholinephosphohydrolase</fullName>
    </alternativeName>
</protein>
<feature type="signal peptide" evidence="1">
    <location>
        <begin position="1"/>
        <end position="28"/>
    </location>
</feature>
<feature type="chain" id="PRO_0000023934" description="Phospholipase C">
    <location>
        <begin position="29"/>
        <end position="399"/>
    </location>
</feature>
<feature type="domain" description="Zn-dependent PLC" evidence="3">
    <location>
        <begin position="29"/>
        <end position="277"/>
    </location>
</feature>
<feature type="domain" description="PLAT" evidence="2">
    <location>
        <begin position="283"/>
        <end position="399"/>
    </location>
</feature>
<feature type="region of interest" description="Linker">
    <location>
        <begin position="275"/>
        <end position="282"/>
    </location>
</feature>
<feature type="binding site" evidence="3">
    <location>
        <position position="28"/>
    </location>
    <ligand>
        <name>Zn(2+)</name>
        <dbReference type="ChEBI" id="CHEBI:29105"/>
        <label>1</label>
    </ligand>
</feature>
<feature type="binding site" evidence="3">
    <location>
        <position position="38"/>
    </location>
    <ligand>
        <name>Zn(2+)</name>
        <dbReference type="ChEBI" id="CHEBI:29105"/>
        <label>1</label>
    </ligand>
</feature>
<feature type="binding site" evidence="3">
    <location>
        <position position="83"/>
    </location>
    <ligand>
        <name>Zn(2+)</name>
        <dbReference type="ChEBI" id="CHEBI:29105"/>
        <label>3</label>
    </ligand>
</feature>
<feature type="binding site" evidence="3">
    <location>
        <position position="95"/>
    </location>
    <ligand>
        <name>Zn(2+)</name>
        <dbReference type="ChEBI" id="CHEBI:29105"/>
        <label>3</label>
    </ligand>
</feature>
<feature type="binding site" evidence="3">
    <location>
        <position position="153"/>
    </location>
    <ligand>
        <name>Zn(2+)</name>
        <dbReference type="ChEBI" id="CHEBI:29105"/>
        <label>3</label>
    </ligand>
</feature>
<feature type="binding site" evidence="3">
    <location>
        <position position="157"/>
    </location>
    <ligand>
        <name>Zn(2+)</name>
        <dbReference type="ChEBI" id="CHEBI:29105"/>
        <label>1</label>
    </ligand>
</feature>
<feature type="binding site" evidence="3">
    <location>
        <position position="157"/>
    </location>
    <ligand>
        <name>Zn(2+)</name>
        <dbReference type="ChEBI" id="CHEBI:29105"/>
        <label>3</label>
    </ligand>
</feature>
<feature type="binding site" evidence="3">
    <location>
        <position position="163"/>
    </location>
    <ligand>
        <name>Zn(2+)</name>
        <dbReference type="ChEBI" id="CHEBI:29105"/>
        <label>2</label>
    </ligand>
</feature>
<feature type="binding site" evidence="3">
    <location>
        <position position="175"/>
    </location>
    <ligand>
        <name>Zn(2+)</name>
        <dbReference type="ChEBI" id="CHEBI:29105"/>
        <label>2</label>
    </ligand>
</feature>
<feature type="binding site" evidence="3">
    <location>
        <position position="179"/>
    </location>
    <ligand>
        <name>Zn(2+)</name>
        <dbReference type="ChEBI" id="CHEBI:29105"/>
        <label>2</label>
    </ligand>
</feature>
<feature type="binding site" evidence="1">
    <location>
        <position position="298"/>
    </location>
    <ligand>
        <name>Ca(2+)</name>
        <dbReference type="ChEBI" id="CHEBI:29108"/>
        <label>1</label>
    </ligand>
</feature>
<feature type="binding site" evidence="1">
    <location>
        <position position="299"/>
    </location>
    <ligand>
        <name>Ca(2+)</name>
        <dbReference type="ChEBI" id="CHEBI:29108"/>
        <label>3</label>
    </ligand>
</feature>
<feature type="binding site" evidence="1">
    <location>
        <position position="300"/>
    </location>
    <ligand>
        <name>Ca(2+)</name>
        <dbReference type="ChEBI" id="CHEBI:29108"/>
        <label>3</label>
    </ligand>
</feature>
<feature type="binding site" evidence="1">
    <location>
        <position position="320"/>
    </location>
    <ligand>
        <name>Ca(2+)</name>
        <dbReference type="ChEBI" id="CHEBI:29108"/>
        <label>2</label>
    </ligand>
</feature>
<feature type="binding site" evidence="1">
    <location>
        <position position="321"/>
    </location>
    <ligand>
        <name>Ca(2+)</name>
        <dbReference type="ChEBI" id="CHEBI:29108"/>
        <label>2</label>
    </ligand>
</feature>
<feature type="binding site" evidence="1">
    <location>
        <position position="323"/>
    </location>
    <ligand>
        <name>Ca(2+)</name>
        <dbReference type="ChEBI" id="CHEBI:29108"/>
        <label>2</label>
    </ligand>
</feature>
<feature type="binding site" evidence="1">
    <location>
        <position position="324"/>
    </location>
    <ligand>
        <name>Ca(2+)</name>
        <dbReference type="ChEBI" id="CHEBI:29108"/>
        <label>3</label>
    </ligand>
</feature>
<feature type="binding site" evidence="1">
    <location>
        <position position="325"/>
    </location>
    <ligand>
        <name>Ca(2+)</name>
        <dbReference type="ChEBI" id="CHEBI:29108"/>
        <label>2</label>
    </ligand>
</feature>
<feature type="binding site" evidence="1">
    <location>
        <position position="325"/>
    </location>
    <ligand>
        <name>Ca(2+)</name>
        <dbReference type="ChEBI" id="CHEBI:29108"/>
        <label>3</label>
    </ligand>
</feature>
<feature type="binding site" evidence="1">
    <location>
        <position position="363"/>
    </location>
    <ligand>
        <name>Ca(2+)</name>
        <dbReference type="ChEBI" id="CHEBI:29108"/>
        <label>1</label>
    </ligand>
</feature>
<proteinExistence type="inferred from homology"/>